<keyword id="KW-0963">Cytoplasm</keyword>
<keyword id="KW-0460">Magnesium</keyword>
<keyword id="KW-0479">Metal-binding</keyword>
<keyword id="KW-0548">Nucleotidyltransferase</keyword>
<keyword id="KW-1185">Reference proteome</keyword>
<keyword id="KW-0694">RNA-binding</keyword>
<keyword id="KW-0808">Transferase</keyword>
<protein>
    <recommendedName>
        <fullName evidence="1">Polyribonucleotide nucleotidyltransferase</fullName>
        <ecNumber evidence="1">2.7.7.8</ecNumber>
    </recommendedName>
    <alternativeName>
        <fullName evidence="1">Polynucleotide phosphorylase</fullName>
        <shortName evidence="1">PNPase</shortName>
    </alternativeName>
</protein>
<accession>A1VM56</accession>
<reference key="1">
    <citation type="journal article" date="2009" name="Environ. Microbiol.">
        <title>The genome of Polaromonas naphthalenivorans strain CJ2, isolated from coal tar-contaminated sediment, reveals physiological and metabolic versatility and evolution through extensive horizontal gene transfer.</title>
        <authorList>
            <person name="Yagi J.M."/>
            <person name="Sims D."/>
            <person name="Brettin T."/>
            <person name="Bruce D."/>
            <person name="Madsen E.L."/>
        </authorList>
    </citation>
    <scope>NUCLEOTIDE SEQUENCE [LARGE SCALE GENOMIC DNA]</scope>
    <source>
        <strain>CJ2</strain>
    </source>
</reference>
<proteinExistence type="inferred from homology"/>
<name>PNP_POLNA</name>
<evidence type="ECO:0000255" key="1">
    <source>
        <dbReference type="HAMAP-Rule" id="MF_01595"/>
    </source>
</evidence>
<dbReference type="EC" id="2.7.7.8" evidence="1"/>
<dbReference type="EMBL" id="CP000529">
    <property type="protein sequence ID" value="ABM36734.1"/>
    <property type="molecule type" value="Genomic_DNA"/>
</dbReference>
<dbReference type="RefSeq" id="WP_011800821.1">
    <property type="nucleotide sequence ID" value="NC_008781.1"/>
</dbReference>
<dbReference type="SMR" id="A1VM56"/>
<dbReference type="STRING" id="365044.Pnap_1420"/>
<dbReference type="KEGG" id="pna:Pnap_1420"/>
<dbReference type="eggNOG" id="COG1185">
    <property type="taxonomic scope" value="Bacteria"/>
</dbReference>
<dbReference type="HOGENOM" id="CLU_004217_2_2_4"/>
<dbReference type="OrthoDB" id="9804305at2"/>
<dbReference type="Proteomes" id="UP000000644">
    <property type="component" value="Chromosome"/>
</dbReference>
<dbReference type="GO" id="GO:0005829">
    <property type="term" value="C:cytosol"/>
    <property type="evidence" value="ECO:0007669"/>
    <property type="project" value="TreeGrafter"/>
</dbReference>
<dbReference type="GO" id="GO:0000175">
    <property type="term" value="F:3'-5'-RNA exonuclease activity"/>
    <property type="evidence" value="ECO:0007669"/>
    <property type="project" value="TreeGrafter"/>
</dbReference>
<dbReference type="GO" id="GO:0000287">
    <property type="term" value="F:magnesium ion binding"/>
    <property type="evidence" value="ECO:0007669"/>
    <property type="project" value="UniProtKB-UniRule"/>
</dbReference>
<dbReference type="GO" id="GO:0004654">
    <property type="term" value="F:polyribonucleotide nucleotidyltransferase activity"/>
    <property type="evidence" value="ECO:0007669"/>
    <property type="project" value="UniProtKB-UniRule"/>
</dbReference>
<dbReference type="GO" id="GO:0003723">
    <property type="term" value="F:RNA binding"/>
    <property type="evidence" value="ECO:0007669"/>
    <property type="project" value="UniProtKB-UniRule"/>
</dbReference>
<dbReference type="GO" id="GO:0006402">
    <property type="term" value="P:mRNA catabolic process"/>
    <property type="evidence" value="ECO:0007669"/>
    <property type="project" value="UniProtKB-UniRule"/>
</dbReference>
<dbReference type="GO" id="GO:0006396">
    <property type="term" value="P:RNA processing"/>
    <property type="evidence" value="ECO:0007669"/>
    <property type="project" value="InterPro"/>
</dbReference>
<dbReference type="CDD" id="cd02393">
    <property type="entry name" value="KH-I_PNPase"/>
    <property type="match status" value="1"/>
</dbReference>
<dbReference type="CDD" id="cd11363">
    <property type="entry name" value="RNase_PH_PNPase_1"/>
    <property type="match status" value="1"/>
</dbReference>
<dbReference type="CDD" id="cd11364">
    <property type="entry name" value="RNase_PH_PNPase_2"/>
    <property type="match status" value="1"/>
</dbReference>
<dbReference type="CDD" id="cd04472">
    <property type="entry name" value="S1_PNPase"/>
    <property type="match status" value="1"/>
</dbReference>
<dbReference type="FunFam" id="2.40.50.140:FF:000023">
    <property type="entry name" value="Polyribonucleotide nucleotidyltransferase"/>
    <property type="match status" value="1"/>
</dbReference>
<dbReference type="FunFam" id="3.30.1370.10:FF:000001">
    <property type="entry name" value="Polyribonucleotide nucleotidyltransferase"/>
    <property type="match status" value="1"/>
</dbReference>
<dbReference type="FunFam" id="3.30.230.70:FF:000001">
    <property type="entry name" value="Polyribonucleotide nucleotidyltransferase"/>
    <property type="match status" value="1"/>
</dbReference>
<dbReference type="FunFam" id="3.30.230.70:FF:000002">
    <property type="entry name" value="Polyribonucleotide nucleotidyltransferase"/>
    <property type="match status" value="1"/>
</dbReference>
<dbReference type="Gene3D" id="3.30.230.70">
    <property type="entry name" value="GHMP Kinase, N-terminal domain"/>
    <property type="match status" value="2"/>
</dbReference>
<dbReference type="Gene3D" id="3.30.1370.10">
    <property type="entry name" value="K Homology domain, type 1"/>
    <property type="match status" value="1"/>
</dbReference>
<dbReference type="Gene3D" id="2.40.50.140">
    <property type="entry name" value="Nucleic acid-binding proteins"/>
    <property type="match status" value="1"/>
</dbReference>
<dbReference type="HAMAP" id="MF_01595">
    <property type="entry name" value="PNPase"/>
    <property type="match status" value="1"/>
</dbReference>
<dbReference type="InterPro" id="IPR001247">
    <property type="entry name" value="ExoRNase_PH_dom1"/>
</dbReference>
<dbReference type="InterPro" id="IPR015847">
    <property type="entry name" value="ExoRNase_PH_dom2"/>
</dbReference>
<dbReference type="InterPro" id="IPR036345">
    <property type="entry name" value="ExoRNase_PH_dom2_sf"/>
</dbReference>
<dbReference type="InterPro" id="IPR004087">
    <property type="entry name" value="KH_dom"/>
</dbReference>
<dbReference type="InterPro" id="IPR004088">
    <property type="entry name" value="KH_dom_type_1"/>
</dbReference>
<dbReference type="InterPro" id="IPR036612">
    <property type="entry name" value="KH_dom_type_1_sf"/>
</dbReference>
<dbReference type="InterPro" id="IPR012340">
    <property type="entry name" value="NA-bd_OB-fold"/>
</dbReference>
<dbReference type="InterPro" id="IPR012162">
    <property type="entry name" value="PNPase"/>
</dbReference>
<dbReference type="InterPro" id="IPR027408">
    <property type="entry name" value="PNPase/RNase_PH_dom_sf"/>
</dbReference>
<dbReference type="InterPro" id="IPR015848">
    <property type="entry name" value="PNPase_PH_RNA-bd_bac/org-type"/>
</dbReference>
<dbReference type="InterPro" id="IPR036456">
    <property type="entry name" value="PNPase_PH_RNA-bd_sf"/>
</dbReference>
<dbReference type="InterPro" id="IPR020568">
    <property type="entry name" value="Ribosomal_Su5_D2-typ_SF"/>
</dbReference>
<dbReference type="InterPro" id="IPR003029">
    <property type="entry name" value="S1_domain"/>
</dbReference>
<dbReference type="NCBIfam" id="TIGR03591">
    <property type="entry name" value="polynuc_phos"/>
    <property type="match status" value="1"/>
</dbReference>
<dbReference type="NCBIfam" id="NF008805">
    <property type="entry name" value="PRK11824.1"/>
    <property type="match status" value="1"/>
</dbReference>
<dbReference type="PANTHER" id="PTHR11252">
    <property type="entry name" value="POLYRIBONUCLEOTIDE NUCLEOTIDYLTRANSFERASE"/>
    <property type="match status" value="1"/>
</dbReference>
<dbReference type="PANTHER" id="PTHR11252:SF0">
    <property type="entry name" value="POLYRIBONUCLEOTIDE NUCLEOTIDYLTRANSFERASE 1, MITOCHONDRIAL"/>
    <property type="match status" value="1"/>
</dbReference>
<dbReference type="Pfam" id="PF00013">
    <property type="entry name" value="KH_1"/>
    <property type="match status" value="1"/>
</dbReference>
<dbReference type="Pfam" id="PF03726">
    <property type="entry name" value="PNPase"/>
    <property type="match status" value="1"/>
</dbReference>
<dbReference type="Pfam" id="PF01138">
    <property type="entry name" value="RNase_PH"/>
    <property type="match status" value="2"/>
</dbReference>
<dbReference type="Pfam" id="PF03725">
    <property type="entry name" value="RNase_PH_C"/>
    <property type="match status" value="2"/>
</dbReference>
<dbReference type="Pfam" id="PF00575">
    <property type="entry name" value="S1"/>
    <property type="match status" value="1"/>
</dbReference>
<dbReference type="PIRSF" id="PIRSF005499">
    <property type="entry name" value="PNPase"/>
    <property type="match status" value="1"/>
</dbReference>
<dbReference type="SMART" id="SM00322">
    <property type="entry name" value="KH"/>
    <property type="match status" value="1"/>
</dbReference>
<dbReference type="SMART" id="SM00316">
    <property type="entry name" value="S1"/>
    <property type="match status" value="1"/>
</dbReference>
<dbReference type="SUPFAM" id="SSF54791">
    <property type="entry name" value="Eukaryotic type KH-domain (KH-domain type I)"/>
    <property type="match status" value="1"/>
</dbReference>
<dbReference type="SUPFAM" id="SSF50249">
    <property type="entry name" value="Nucleic acid-binding proteins"/>
    <property type="match status" value="1"/>
</dbReference>
<dbReference type="SUPFAM" id="SSF46915">
    <property type="entry name" value="Polynucleotide phosphorylase/guanosine pentaphosphate synthase (PNPase/GPSI), domain 3"/>
    <property type="match status" value="1"/>
</dbReference>
<dbReference type="SUPFAM" id="SSF55666">
    <property type="entry name" value="Ribonuclease PH domain 2-like"/>
    <property type="match status" value="2"/>
</dbReference>
<dbReference type="SUPFAM" id="SSF54211">
    <property type="entry name" value="Ribosomal protein S5 domain 2-like"/>
    <property type="match status" value="2"/>
</dbReference>
<dbReference type="PROSITE" id="PS50084">
    <property type="entry name" value="KH_TYPE_1"/>
    <property type="match status" value="1"/>
</dbReference>
<dbReference type="PROSITE" id="PS50126">
    <property type="entry name" value="S1"/>
    <property type="match status" value="1"/>
</dbReference>
<sequence>MSIFNKVTKSFQWGQHKVTMETGEMARQAGGAVLLDMDGTVVLATVVAKSDAKPGQDFFPLTVDYLEKTYAAGRIPGSFFKREGRPSEFETLTSRLIDRPIRPLFPEGFFNEVQVVIHVLSLNPEVEGDIPALIASSAALSISGIPFNGPIGAARVAYINGEYVLNPGKTQLQNSTMDLVVAGTEAAVLMVESEAKQLSEEIMLGAIVFGHEQGNIAINAIHELVRDAGKPVWDWKAPAKDEVLIAKVVALAEEKLVAAYQIRNKQARTHATRQVTTWTKMGLKAEGVEFDGVAVEGMLFDIEAKIVRSQILAGDPRIDGRDTRTVRPIEIRNSVLPRTHGSALFTRGETQALVVTTLGTERDAQRIDALSGDYEDRFMLHYNMPPFATGETGRVGSPKRREIGHGRLAKRALIAVLPSKEEFPYTMRVVSEITESNGSSSMASVCGGCLSLMDAGVPMKAHVAGIAMGLIKEDNRFAVLTDILGDEDHLGDMDFKVAGTTFGITALQMDIKIQGITKEIMQVALAQAKEARMHILGKMQEAMGQANAEVSDFAPRLYVMKINPEKIRDVIGKGGAVIRALTEETGTQINIEEDGTITIASNDSAKADEAKRRIAEITAEVEIGKVYEGAITKILDFGALVNLMPGKDGLLHISQIAHERVEKVTDYLSEGQIIKVKVLETDEKGRVKLSMKALLDRPSQHQG</sequence>
<feature type="chain" id="PRO_0000329759" description="Polyribonucleotide nucleotidyltransferase">
    <location>
        <begin position="1"/>
        <end position="703"/>
    </location>
</feature>
<feature type="domain" description="KH" evidence="1">
    <location>
        <begin position="555"/>
        <end position="614"/>
    </location>
</feature>
<feature type="domain" description="S1 motif" evidence="1">
    <location>
        <begin position="624"/>
        <end position="692"/>
    </location>
</feature>
<feature type="binding site" evidence="1">
    <location>
        <position position="488"/>
    </location>
    <ligand>
        <name>Mg(2+)</name>
        <dbReference type="ChEBI" id="CHEBI:18420"/>
    </ligand>
</feature>
<feature type="binding site" evidence="1">
    <location>
        <position position="494"/>
    </location>
    <ligand>
        <name>Mg(2+)</name>
        <dbReference type="ChEBI" id="CHEBI:18420"/>
    </ligand>
</feature>
<comment type="function">
    <text evidence="1">Involved in mRNA degradation. Catalyzes the phosphorolysis of single-stranded polyribonucleotides processively in the 3'- to 5'-direction.</text>
</comment>
<comment type="catalytic activity">
    <reaction evidence="1">
        <text>RNA(n+1) + phosphate = RNA(n) + a ribonucleoside 5'-diphosphate</text>
        <dbReference type="Rhea" id="RHEA:22096"/>
        <dbReference type="Rhea" id="RHEA-COMP:14527"/>
        <dbReference type="Rhea" id="RHEA-COMP:17342"/>
        <dbReference type="ChEBI" id="CHEBI:43474"/>
        <dbReference type="ChEBI" id="CHEBI:57930"/>
        <dbReference type="ChEBI" id="CHEBI:140395"/>
        <dbReference type="EC" id="2.7.7.8"/>
    </reaction>
</comment>
<comment type="cofactor">
    <cofactor evidence="1">
        <name>Mg(2+)</name>
        <dbReference type="ChEBI" id="CHEBI:18420"/>
    </cofactor>
</comment>
<comment type="subcellular location">
    <subcellularLocation>
        <location evidence="1">Cytoplasm</location>
    </subcellularLocation>
</comment>
<comment type="similarity">
    <text evidence="1">Belongs to the polyribonucleotide nucleotidyltransferase family.</text>
</comment>
<gene>
    <name evidence="1" type="primary">pnp</name>
    <name type="ordered locus">Pnap_1420</name>
</gene>
<organism>
    <name type="scientific">Polaromonas naphthalenivorans (strain CJ2)</name>
    <dbReference type="NCBI Taxonomy" id="365044"/>
    <lineage>
        <taxon>Bacteria</taxon>
        <taxon>Pseudomonadati</taxon>
        <taxon>Pseudomonadota</taxon>
        <taxon>Betaproteobacteria</taxon>
        <taxon>Burkholderiales</taxon>
        <taxon>Comamonadaceae</taxon>
        <taxon>Polaromonas</taxon>
    </lineage>
</organism>